<reference key="1">
    <citation type="journal article" date="2002" name="Proc. Natl. Acad. Sci. U.S.A.">
        <title>Extensive mosaic structure revealed by the complete genome sequence of uropathogenic Escherichia coli.</title>
        <authorList>
            <person name="Welch R.A."/>
            <person name="Burland V."/>
            <person name="Plunkett G. III"/>
            <person name="Redford P."/>
            <person name="Roesch P."/>
            <person name="Rasko D."/>
            <person name="Buckles E.L."/>
            <person name="Liou S.-R."/>
            <person name="Boutin A."/>
            <person name="Hackett J."/>
            <person name="Stroud D."/>
            <person name="Mayhew G.F."/>
            <person name="Rose D.J."/>
            <person name="Zhou S."/>
            <person name="Schwartz D.C."/>
            <person name="Perna N.T."/>
            <person name="Mobley H.L.T."/>
            <person name="Donnenberg M.S."/>
            <person name="Blattner F.R."/>
        </authorList>
    </citation>
    <scope>NUCLEOTIDE SEQUENCE [LARGE SCALE GENOMIC DNA]</scope>
    <source>
        <strain>CFT073 / ATCC 700928 / UPEC</strain>
    </source>
</reference>
<gene>
    <name type="primary">rusA</name>
    <name type="ordered locus">c1557</name>
</gene>
<evidence type="ECO:0000250" key="1"/>
<evidence type="ECO:0000305" key="2"/>
<accession>P0AG75</accession>
<accession>P40116</accession>
<organism>
    <name type="scientific">Escherichia coli O6:H1 (strain CFT073 / ATCC 700928 / UPEC)</name>
    <dbReference type="NCBI Taxonomy" id="199310"/>
    <lineage>
        <taxon>Bacteria</taxon>
        <taxon>Pseudomonadati</taxon>
        <taxon>Pseudomonadota</taxon>
        <taxon>Gammaproteobacteria</taxon>
        <taxon>Enterobacterales</taxon>
        <taxon>Enterobacteriaceae</taxon>
        <taxon>Escherichia</taxon>
    </lineage>
</organism>
<keyword id="KW-0227">DNA damage</keyword>
<keyword id="KW-0233">DNA recombination</keyword>
<keyword id="KW-0234">DNA repair</keyword>
<keyword id="KW-0255">Endonuclease</keyword>
<keyword id="KW-0378">Hydrolase</keyword>
<keyword id="KW-0460">Magnesium</keyword>
<keyword id="KW-0479">Metal-binding</keyword>
<keyword id="KW-0540">Nuclease</keyword>
<keyword id="KW-1185">Reference proteome</keyword>
<sequence length="120" mass="13846">MNTYSITLPWPPSNNRYYRHNRGRTHVSAEGQAYRDNVARIIKNAMLDIGLAMPVKIRIECHMPDRRRRDLDNLQKAAFDALTKAGFWLDDAQVVDYRVVKMPVTKGGRLELTITEMGNE</sequence>
<name>RUSA_ECOL6</name>
<proteinExistence type="inferred from homology"/>
<comment type="function">
    <text evidence="1">Endonuclease that resolves Holliday junction intermediates made during homologous genetic recombination and DNA repair. Exhibits sequence and structure-selective cleavage of four-way DNA junctions, where it introduces symmetrical nicks in two strands of the same polarity at the 5' side of CC dinucleotides. Corrects the defects in genetic recombination and DNA repair associated with inactivation of RuvAB or RuvC (By similarity).</text>
</comment>
<comment type="catalytic activity">
    <reaction>
        <text>Endonucleolytic cleavage at a junction such as a reciprocal single-stranded crossover between two homologous DNA duplexes (Holliday junction).</text>
        <dbReference type="EC" id="3.1.21.10"/>
    </reaction>
</comment>
<comment type="cofactor">
    <cofactor evidence="1">
        <name>Mg(2+)</name>
        <dbReference type="ChEBI" id="CHEBI:18420"/>
    </cofactor>
    <text evidence="1">Binds 1 Mg(2+) ion per subunit.</text>
</comment>
<comment type="subunit">
    <text evidence="1">Homodimer.</text>
</comment>
<comment type="similarity">
    <text evidence="2">Belongs to the RusA family.</text>
</comment>
<feature type="chain" id="PRO_0000192005" description="Crossover junction endodeoxyribonuclease RusA">
    <location>
        <begin position="1"/>
        <end position="120"/>
    </location>
</feature>
<feature type="region of interest" description="DNA-binding" evidence="1">
    <location>
        <begin position="13"/>
        <end position="16"/>
    </location>
</feature>
<feature type="region of interest" description="DNA-binding" evidence="1">
    <location>
        <begin position="66"/>
        <end position="73"/>
    </location>
</feature>
<feature type="binding site" evidence="1">
    <location>
        <position position="70"/>
    </location>
    <ligand>
        <name>Mg(2+)</name>
        <dbReference type="ChEBI" id="CHEBI:18420"/>
    </ligand>
</feature>
<feature type="binding site" evidence="1">
    <location>
        <position position="72"/>
    </location>
    <ligand>
        <name>Mg(2+)</name>
        <dbReference type="ChEBI" id="CHEBI:18420"/>
    </ligand>
</feature>
<feature type="binding site" evidence="1">
    <location>
        <position position="91"/>
    </location>
    <ligand>
        <name>Mg(2+)</name>
        <dbReference type="ChEBI" id="CHEBI:18420"/>
    </ligand>
</feature>
<dbReference type="EC" id="3.1.21.10"/>
<dbReference type="EMBL" id="AE014075">
    <property type="protein sequence ID" value="AAN80026.1"/>
    <property type="molecule type" value="Genomic_DNA"/>
</dbReference>
<dbReference type="RefSeq" id="WP_001099712.1">
    <property type="nucleotide sequence ID" value="NZ_CP051263.1"/>
</dbReference>
<dbReference type="SMR" id="P0AG75"/>
<dbReference type="STRING" id="199310.c1557"/>
<dbReference type="KEGG" id="ecc:c1557"/>
<dbReference type="eggNOG" id="COG4570">
    <property type="taxonomic scope" value="Bacteria"/>
</dbReference>
<dbReference type="HOGENOM" id="CLU_139466_0_2_6"/>
<dbReference type="BioCyc" id="ECOL199310:C1557-MONOMER"/>
<dbReference type="Proteomes" id="UP000001410">
    <property type="component" value="Chromosome"/>
</dbReference>
<dbReference type="GO" id="GO:0008821">
    <property type="term" value="F:crossover junction DNA endonuclease activity"/>
    <property type="evidence" value="ECO:0007669"/>
    <property type="project" value="InterPro"/>
</dbReference>
<dbReference type="GO" id="GO:0000287">
    <property type="term" value="F:magnesium ion binding"/>
    <property type="evidence" value="ECO:0007669"/>
    <property type="project" value="InterPro"/>
</dbReference>
<dbReference type="GO" id="GO:0006310">
    <property type="term" value="P:DNA recombination"/>
    <property type="evidence" value="ECO:0007669"/>
    <property type="project" value="UniProtKB-KW"/>
</dbReference>
<dbReference type="GO" id="GO:0006281">
    <property type="term" value="P:DNA repair"/>
    <property type="evidence" value="ECO:0007669"/>
    <property type="project" value="UniProtKB-KW"/>
</dbReference>
<dbReference type="FunFam" id="3.30.1330.70:FF:000001">
    <property type="entry name" value="Crossover junction endodeoxyribonuclease RusA"/>
    <property type="match status" value="1"/>
</dbReference>
<dbReference type="Gene3D" id="3.30.1330.70">
    <property type="entry name" value="Holliday junction resolvase RusA"/>
    <property type="match status" value="1"/>
</dbReference>
<dbReference type="InterPro" id="IPR016281">
    <property type="entry name" value="Endonuclease_RusA"/>
</dbReference>
<dbReference type="InterPro" id="IPR008822">
    <property type="entry name" value="Endonuclease_RusA-like"/>
</dbReference>
<dbReference type="InterPro" id="IPR036614">
    <property type="entry name" value="RusA-like_sf"/>
</dbReference>
<dbReference type="NCBIfam" id="NF007305">
    <property type="entry name" value="PRK09786.1"/>
    <property type="match status" value="1"/>
</dbReference>
<dbReference type="Pfam" id="PF05866">
    <property type="entry name" value="RusA"/>
    <property type="match status" value="1"/>
</dbReference>
<dbReference type="PIRSF" id="PIRSF001007">
    <property type="entry name" value="RusA"/>
    <property type="match status" value="1"/>
</dbReference>
<dbReference type="SUPFAM" id="SSF103084">
    <property type="entry name" value="Holliday junction resolvase RusA"/>
    <property type="match status" value="1"/>
</dbReference>
<protein>
    <recommendedName>
        <fullName>Crossover junction endodeoxyribonuclease RusA</fullName>
        <ecNumber>3.1.21.10</ecNumber>
    </recommendedName>
    <alternativeName>
        <fullName>Holliday junction nuclease RusA</fullName>
    </alternativeName>
    <alternativeName>
        <fullName>Holliday junction resolvase</fullName>
    </alternativeName>
</protein>